<proteinExistence type="evidence at protein level"/>
<accession>Q9UN81</accession>
<accession>Q15605</accession>
<name>LORF1_HUMAN</name>
<comment type="function">
    <text evidence="3 8 11 12 13">Nucleic acid-binding protein which is essential for retrotransposition of LINE-1 elements in the genome. Functions as a nucleic acid chaperone binding its own transcript and therefore preferentially mobilizing the transcript from which they are encoded.</text>
</comment>
<comment type="subunit">
    <text evidence="4 9 10 11">Homotrimer (via coiled coil domain). May also form larger homooligomers. May interact with DDX39A, HNRNPA1, SERBP1 and YBX1. Interacts with TEX19 and UBR2 (PubMed:28806172). Interacts with MOV10 (PubMed:23093941). Interacts with APOBEC3D; this interaction inhibits LINE-1 retrotransposition (PubMed:27428332).</text>
</comment>
<comment type="interaction">
    <interactant intactId="EBI-722458">
        <id>Q9UN81</id>
    </interactant>
    <interactant intactId="EBI-722458">
        <id>Q9UN81</id>
        <label>L1RE1</label>
    </interactant>
    <organismsDiffer>false</organismsDiffer>
    <experiments>4</experiments>
</comment>
<comment type="interaction">
    <interactant intactId="EBI-722458">
        <id>Q9UN81</id>
    </interactant>
    <interactant intactId="EBI-373471">
        <id>Q92900</id>
        <label>UPF1</label>
    </interactant>
    <organismsDiffer>false</organismsDiffer>
    <experiments>6</experiments>
</comment>
<comment type="interaction">
    <interactant intactId="EBI-722458">
        <id>Q9UN81</id>
    </interactant>
    <interactant intactId="EBI-8874509">
        <id>Q8TE30</id>
    </interactant>
    <organismsDiffer>false</organismsDiffer>
    <experiments>15</experiments>
</comment>
<comment type="subcellular location">
    <subcellularLocation>
        <location evidence="5">Nucleus</location>
        <location evidence="5">Nucleolus</location>
    </subcellularLocation>
    <subcellularLocation>
        <location evidence="10">Cytoplasm</location>
    </subcellularLocation>
    <subcellularLocation>
        <location evidence="4 12">Cytoplasm</location>
        <location evidence="4 12">Cytoplasmic ribonucleoprotein granule</location>
    </subcellularLocation>
    <subcellularLocation>
        <location evidence="5 9">Cytoplasm</location>
        <location evidence="5 9">Stress granule</location>
    </subcellularLocation>
    <text evidence="4 5">Colocalizes with its encoding RNA in cytoplasmic ribonucleoprotein particle (PubMed:16183655). Mainly cytoplasmic, rarely detected in the nucleus, possibly within the nucleolus (PubMed:17562864).</text>
</comment>
<comment type="domain">
    <text>The coiled coil domain mediates homotrimerization.</text>
</comment>
<comment type="domain">
    <text>The RRM and the CTD domain are both required for proper RNA-binding activity.</text>
</comment>
<comment type="PTM">
    <text evidence="11">Polyubiquitinated, probably by UBR2, which induces its degradation.</text>
</comment>
<comment type="miscellaneous">
    <text>Long interspersed element-1/LINE-1/L1 retrotransposons are present in more than 500'000 full (6 kb) or truncated copies in the human genome. Most of them are inactive but 80 to 100 of those elements could be transcribed, translated and active in any individual. An active LINE-1 encodes for 2 proteins translated from a single RNA containing 2 non-overlapping ORFs, ORF1 and ORF2. ORF1p is described in this entry as a representative of all ORF1p potentially expressed by active elements. ORF2p is described in the related entry AC O00370.</text>
</comment>
<comment type="similarity">
    <text evidence="14">Belongs to the transposase 22 family.</text>
</comment>
<sequence>MGKKQNRKTGNSKTQSASPPPKERSSSPATEQSWMENDFDELREEGFRRSNYSELREDIQTKGKEVENFEKNLEECITRITNTEKCLKELMELKTKARELREECRSLRSRCDQLEERVSAMEDEMNEMKREGKFREKRIKRNEQSLQEIWDYVKRPNLRLIGVPESDVENGTKLENTLQDIIQENFPNLARQANVQIQEIQRTPQRYSSRRATPRHIIVRFTKVEMKEKMLRAAREKGRVTLKGKPIRLTADLSAETLQARREWGPIFNILKEKNFQPRISYPAKLSFISEGEIKYFIDKQMLRDFVTTRPALKELLKEALNMERNNRYQPLQNHAKM</sequence>
<keyword id="KW-0002">3D-structure</keyword>
<keyword id="KW-0175">Coiled coil</keyword>
<keyword id="KW-0963">Cytoplasm</keyword>
<keyword id="KW-0547">Nucleotide-binding</keyword>
<keyword id="KW-0539">Nucleus</keyword>
<keyword id="KW-1267">Proteomics identification</keyword>
<keyword id="KW-1185">Reference proteome</keyword>
<keyword id="KW-0832">Ubl conjugation</keyword>
<evidence type="ECO:0000255" key="1"/>
<evidence type="ECO:0000256" key="2">
    <source>
        <dbReference type="SAM" id="MobiDB-lite"/>
    </source>
</evidence>
<evidence type="ECO:0000269" key="3">
    <source>
    </source>
</evidence>
<evidence type="ECO:0000269" key="4">
    <source>
    </source>
</evidence>
<evidence type="ECO:0000269" key="5">
    <source>
    </source>
</evidence>
<evidence type="ECO:0000269" key="6">
    <source>
    </source>
</evidence>
<evidence type="ECO:0000269" key="7">
    <source>
    </source>
</evidence>
<evidence type="ECO:0000269" key="8">
    <source>
    </source>
</evidence>
<evidence type="ECO:0000269" key="9">
    <source>
    </source>
</evidence>
<evidence type="ECO:0000269" key="10">
    <source>
    </source>
</evidence>
<evidence type="ECO:0000269" key="11">
    <source>
    </source>
</evidence>
<evidence type="ECO:0000269" key="12">
    <source>
    </source>
</evidence>
<evidence type="ECO:0000269" key="13">
    <source>
    </source>
</evidence>
<evidence type="ECO:0000305" key="14"/>
<evidence type="ECO:0007829" key="15">
    <source>
        <dbReference type="PDB" id="2LDY"/>
    </source>
</evidence>
<evidence type="ECO:0007829" key="16">
    <source>
        <dbReference type="PDB" id="2W7A"/>
    </source>
</evidence>
<evidence type="ECO:0007829" key="17">
    <source>
        <dbReference type="PDB" id="2YKO"/>
    </source>
</evidence>
<evidence type="ECO:0007829" key="18">
    <source>
        <dbReference type="PDB" id="6FIA"/>
    </source>
</evidence>
<organism>
    <name type="scientific">Homo sapiens</name>
    <name type="common">Human</name>
    <dbReference type="NCBI Taxonomy" id="9606"/>
    <lineage>
        <taxon>Eukaryota</taxon>
        <taxon>Metazoa</taxon>
        <taxon>Chordata</taxon>
        <taxon>Craniata</taxon>
        <taxon>Vertebrata</taxon>
        <taxon>Euteleostomi</taxon>
        <taxon>Mammalia</taxon>
        <taxon>Eutheria</taxon>
        <taxon>Euarchontoglires</taxon>
        <taxon>Primates</taxon>
        <taxon>Haplorrhini</taxon>
        <taxon>Catarrhini</taxon>
        <taxon>Hominidae</taxon>
        <taxon>Homo</taxon>
    </lineage>
</organism>
<reference key="1">
    <citation type="journal article" date="1999" name="Hum. Mol. Genet.">
        <title>Full-length human L1 insertions retain the capacity for high frequency retrotransposition in cultured cells.</title>
        <authorList>
            <person name="Kimberland M.L."/>
            <person name="Divoky V."/>
            <person name="Prchal J."/>
            <person name="Schwahn U."/>
            <person name="Berger W."/>
            <person name="Kazazian H.H. Jr."/>
        </authorList>
    </citation>
    <scope>NUCLEOTIDE SEQUENCE [GENOMIC DNA]</scope>
</reference>
<reference key="2">
    <citation type="journal article" date="2000" name="Hum. Mol. Genet.">
        <title>A polymorphic L1 retroposon insertion in the centromere of the human Y chromosome.</title>
        <authorList>
            <person name="Santos F.R."/>
            <person name="Pandya A."/>
            <person name="Kayser M."/>
            <person name="Mitchell R.J."/>
            <person name="Liu A."/>
            <person name="Singh L."/>
            <person name="Destro-Bisol G."/>
            <person name="Novelletto A."/>
            <person name="Qamar R."/>
            <person name="Mehdi S.Q."/>
            <person name="Adhikari R."/>
            <person name="de Knijff P."/>
            <person name="Tyler-Smith C."/>
        </authorList>
    </citation>
    <scope>NUCLEOTIDE SEQUENCE [GENOMIC DNA]</scope>
</reference>
<reference key="3">
    <citation type="journal article" date="1996" name="Cell">
        <title>High frequency retrotransposition in cultured mammalian cells.</title>
        <authorList>
            <person name="Moran J.V."/>
            <person name="Holmes S.E."/>
            <person name="Naas T.P."/>
            <person name="DeBerardinis R.J."/>
            <person name="Boeke J.D."/>
            <person name="Kazazian H.H. Jr."/>
        </authorList>
    </citation>
    <scope>FUNCTION IN LINE-1 RETROTRANSPOSITION</scope>
</reference>
<reference key="4">
    <citation type="journal article" date="2001" name="Mol. Cell. Biol.">
        <title>Human L1 retrotransposition: cis preference versus trans complementation.</title>
        <authorList>
            <person name="Wei W."/>
            <person name="Gilbert N."/>
            <person name="Ooi S.L."/>
            <person name="Lawler J.F."/>
            <person name="Ostertag E.M."/>
            <person name="Kazazian H.H."/>
            <person name="Boeke J.D."/>
            <person name="Moran J.V."/>
        </authorList>
    </citation>
    <scope>FUNCTION</scope>
</reference>
<reference key="5">
    <citation type="journal article" date="2005" name="Hum. Mol. Genet.">
        <title>Ribonucleoprotein particle formation is necessary but not sufficient for LINE-1 retrotransposition.</title>
        <authorList>
            <person name="Kulpa D.A."/>
            <person name="Moran J.V."/>
        </authorList>
    </citation>
    <scope>SUBCELLULAR LOCATION</scope>
    <scope>IDENTIFICATION IN A RIBONUCLEOPROTEIN COMPLEX</scope>
</reference>
<reference key="6">
    <citation type="journal article" date="2007" name="Mol. Cell. Biol.">
        <title>LINE-1 ORF1 protein localizes in stress granules with other RNA-binding proteins, including components of RNA interference RNA-induced silencing complex.</title>
        <authorList>
            <person name="Goodier J.L."/>
            <person name="Zhang L."/>
            <person name="Vetter M.R."/>
            <person name="Kazazian H.H. Jr."/>
        </authorList>
    </citation>
    <scope>INTERACTION WITH DDX39A; HNRNPA1; SERBP1 AND YBX1</scope>
    <scope>SUBCELLULAR LOCATION</scope>
    <scope>MUTAGENESIS OF LEU-93; LEU-100; LEU-114; ARG-155; ASN-157; ARG-159; GLU-165 AND 261-ARG-ARG-262</scope>
</reference>
<reference key="7">
    <citation type="journal article" date="2012" name="Nucleic Acids Res.">
        <title>Polymerization and nucleic acid-binding properties of human L1 ORF1 protein.</title>
        <authorList>
            <person name="Callahan K.E."/>
            <person name="Hickman A.B."/>
            <person name="Jones C.E."/>
            <person name="Ghirlando R."/>
            <person name="Furano A.V."/>
        </authorList>
    </citation>
    <scope>FUNCTION AS A NUCLEIC ACID CHAPERONE</scope>
    <scope>HOMOOLIGOMERIZATION</scope>
</reference>
<reference key="8">
    <citation type="journal article" date="2012" name="PLoS Genet.">
        <title>MOV10 RNA helicase is a potent inhibitor of retrotransposition in cells.</title>
        <authorList>
            <person name="Goodier J.L."/>
            <person name="Cheung L.E."/>
            <person name="Kazazian H.H. Jr."/>
        </authorList>
    </citation>
    <scope>FUNCTION</scope>
    <scope>SUBCELLULAR LOCATION</scope>
    <scope>RNA-BINDING</scope>
    <scope>INTERACTION WITH MOV10</scope>
</reference>
<reference key="9">
    <citation type="journal article" date="2017" name="Elife">
        <title>Mobilization of LINE-1 retrotransposons is restricted by Tex19.1 in mouse embryonic stem cells.</title>
        <authorList>
            <person name="MacLennan M."/>
            <person name="Garcia-Canadas M."/>
            <person name="Reichmann J."/>
            <person name="Khazina E."/>
            <person name="Wagner G."/>
            <person name="Playfoot C.J."/>
            <person name="Salvador-Palomeque C."/>
            <person name="Mann A.R."/>
            <person name="Peressini P."/>
            <person name="Sanchez L."/>
            <person name="Dobie K."/>
            <person name="Read D."/>
            <person name="Hung C.C."/>
            <person name="Eskeland R."/>
            <person name="Meehan R.R."/>
            <person name="Weichenrieder O."/>
            <person name="Garcia-Perez J.L."/>
            <person name="Adams I.R."/>
        </authorList>
    </citation>
    <scope>FUNCTION</scope>
    <scope>INTERACTION WITH TEX19.1</scope>
    <scope>UBIQUITINATION</scope>
</reference>
<reference key="10">
    <citation type="journal article" date="2018" name="Cell">
        <title>Uridylation by TUT4/7 Restricts Retrotransposition of Human LINE-1s.</title>
        <authorList>
            <person name="Warkocki Z."/>
            <person name="Krawczyk P.S."/>
            <person name="Adamska D."/>
            <person name="Bijata K."/>
            <person name="Garcia-Perez J.L."/>
            <person name="Dziembowski A."/>
        </authorList>
    </citation>
    <scope>FUNCTION</scope>
    <scope>SUBCELLULAR LOCATION</scope>
</reference>
<reference key="11">
    <citation type="journal article" date="2009" name="Proc. Natl. Acad. Sci. U.S.A.">
        <title>Non-LTR retrotransposons encode noncanonical RRM domains in their first open reading frame.</title>
        <authorList>
            <person name="Khazina E."/>
            <person name="Weichenrieder O."/>
        </authorList>
    </citation>
    <scope>X-RAY CRYSTALLOGRAPHY (1.40 ANGSTROMS) OF 157-252</scope>
    <scope>HOMOTRIMERIZATION</scope>
    <scope>RNA-BINDING</scope>
    <scope>MUTAGENESIS OF ARG-159; ARG-206; ARG-210; ARG-211; ILE-218; ARG-220; ARG-235 AND ARG-261</scope>
</reference>
<reference key="12">
    <citation type="journal article" date="2011" name="Nat. Struct. Mol. Biol.">
        <title>Trimeric structure and flexibility of the L1ORF1 protein in human L1 retrotransposition.</title>
        <authorList>
            <person name="Khazina E."/>
            <person name="Truffault V."/>
            <person name="Buttner R."/>
            <person name="Schmidt S."/>
            <person name="Coles M."/>
            <person name="Weichenrieder O."/>
        </authorList>
    </citation>
    <scope>STRUCTURE BY NMR OF 157-330</scope>
    <scope>X-RAY CRYSTALLOGRAPHY (2.10 ANGSTROMS) OF 104-330</scope>
    <scope>RNA-BINDING</scope>
    <scope>COILED COIL</scope>
    <scope>MUTAGENESIS OF GLU-116; ASP-123; GLY-132; LYS-133; ARG-135; LYS-137; LYS-140; ARG-141; ASN-142; ARG-206; ARG-210; ARG-211; ILE-218; ARG-220; ARG-235; ARG-261 AND TYR-282</scope>
</reference>
<reference key="13">
    <citation type="journal article" date="2016" name="PLoS ONE">
        <title>APOBEC3DE Inhibits LINE-1 Retrotransposition by Interacting with ORF1p and Influencing LINE Reverse Transcriptase Activity.</title>
        <authorList>
            <person name="Liang W."/>
            <person name="Xu J."/>
            <person name="Yuan W."/>
            <person name="Song X."/>
            <person name="Zhang J."/>
            <person name="Wei W."/>
            <person name="Yu X.F."/>
            <person name="Yang Y."/>
        </authorList>
    </citation>
    <scope>FUNCTION</scope>
    <scope>SUBCELLULAR LOCATION</scope>
    <scope>INTERACTION WITH APOBEC3D</scope>
</reference>
<gene>
    <name type="primary">L1RE1</name>
    <name type="synonym">LRE1</name>
</gene>
<protein>
    <recommendedName>
        <fullName>LINE-1 retrotransposable element ORF1 protein</fullName>
        <shortName>L1ORF1p</shortName>
    </recommendedName>
    <alternativeName>
        <fullName>LINE retrotransposable element 1</fullName>
    </alternativeName>
    <alternativeName>
        <fullName>LINE1 retrotransposable element 1</fullName>
    </alternativeName>
</protein>
<dbReference type="EMBL" id="AF148856">
    <property type="protein sequence ID" value="AAD39214.1"/>
    <property type="molecule type" value="Genomic_DNA"/>
</dbReference>
<dbReference type="EMBL" id="M80343">
    <property type="protein sequence ID" value="AAB59367.1"/>
    <property type="molecule type" value="Genomic_DNA"/>
</dbReference>
<dbReference type="PDB" id="2LDY">
    <property type="method" value="NMR"/>
    <property type="chains" value="A=157-330"/>
</dbReference>
<dbReference type="PDB" id="2W7A">
    <property type="method" value="X-ray"/>
    <property type="resolution" value="1.40 A"/>
    <property type="chains" value="A/B=157-250"/>
</dbReference>
<dbReference type="PDB" id="2YKO">
    <property type="method" value="X-ray"/>
    <property type="resolution" value="2.10 A"/>
    <property type="chains" value="A/B/C=106-330"/>
</dbReference>
<dbReference type="PDB" id="2YKP">
    <property type="method" value="X-ray"/>
    <property type="resolution" value="3.10 A"/>
    <property type="chains" value="A/B/C=106-326"/>
</dbReference>
<dbReference type="PDB" id="2YKQ">
    <property type="method" value="X-ray"/>
    <property type="resolution" value="3.10 A"/>
    <property type="chains" value="A/B/C=106-326"/>
</dbReference>
<dbReference type="PDB" id="6FIA">
    <property type="method" value="X-ray"/>
    <property type="resolution" value="2.65 A"/>
    <property type="chains" value="A/B/C/D/E/F=53-152"/>
</dbReference>
<dbReference type="PDBsum" id="2LDY"/>
<dbReference type="PDBsum" id="2W7A"/>
<dbReference type="PDBsum" id="2YKO"/>
<dbReference type="PDBsum" id="2YKP"/>
<dbReference type="PDBsum" id="2YKQ"/>
<dbReference type="PDBsum" id="6FIA"/>
<dbReference type="BMRB" id="Q9UN81"/>
<dbReference type="SMR" id="Q9UN81"/>
<dbReference type="DIP" id="DIP-48676N"/>
<dbReference type="FunCoup" id="Q9UN81">
    <property type="interactions" value="267"/>
</dbReference>
<dbReference type="IntAct" id="Q9UN81">
    <property type="interactions" value="39"/>
</dbReference>
<dbReference type="MINT" id="Q9UN81"/>
<dbReference type="BindingDB" id="Q9UN81"/>
<dbReference type="iPTMnet" id="Q9UN81"/>
<dbReference type="PhosphoSitePlus" id="Q9UN81"/>
<dbReference type="BioMuta" id="HGNC:6686"/>
<dbReference type="jPOST" id="Q9UN81"/>
<dbReference type="MassIVE" id="Q9UN81"/>
<dbReference type="Pumba" id="Q9UN81"/>
<dbReference type="CPTC" id="Q9UN81">
    <property type="antibodies" value="2 antibodies"/>
</dbReference>
<dbReference type="MIM" id="151626">
    <property type="type" value="gene"/>
</dbReference>
<dbReference type="neXtProt" id="NX_Q9UN81"/>
<dbReference type="InParanoid" id="Q9UN81"/>
<dbReference type="PAN-GO" id="Q9UN81">
    <property type="GO annotations" value="3 GO annotations based on evolutionary models"/>
</dbReference>
<dbReference type="PathwayCommons" id="Q9UN81"/>
<dbReference type="SignaLink" id="Q9UN81"/>
<dbReference type="CD-CODE" id="DEE660B4">
    <property type="entry name" value="Stress granule"/>
</dbReference>
<dbReference type="EvolutionaryTrace" id="Q9UN81"/>
<dbReference type="Pharos" id="Q9UN81">
    <property type="development level" value="Tbio"/>
</dbReference>
<dbReference type="Proteomes" id="UP000005640">
    <property type="component" value="Unplaced"/>
</dbReference>
<dbReference type="RNAct" id="Q9UN81">
    <property type="molecule type" value="protein"/>
</dbReference>
<dbReference type="GO" id="GO:0005737">
    <property type="term" value="C:cytoplasm"/>
    <property type="evidence" value="ECO:0000314"/>
    <property type="project" value="UniProtKB"/>
</dbReference>
<dbReference type="GO" id="GO:0036464">
    <property type="term" value="C:cytoplasmic ribonucleoprotein granule"/>
    <property type="evidence" value="ECO:0000314"/>
    <property type="project" value="UniProtKB"/>
</dbReference>
<dbReference type="GO" id="GO:0010494">
    <property type="term" value="C:cytoplasmic stress granule"/>
    <property type="evidence" value="ECO:0000314"/>
    <property type="project" value="UniProtKB"/>
</dbReference>
<dbReference type="GO" id="GO:0005730">
    <property type="term" value="C:nucleolus"/>
    <property type="evidence" value="ECO:0000314"/>
    <property type="project" value="UniProtKB"/>
</dbReference>
<dbReference type="GO" id="GO:1990904">
    <property type="term" value="C:ribonucleoprotein complex"/>
    <property type="evidence" value="ECO:0000314"/>
    <property type="project" value="UniProtKB"/>
</dbReference>
<dbReference type="GO" id="GO:0042802">
    <property type="term" value="F:identical protein binding"/>
    <property type="evidence" value="ECO:0000314"/>
    <property type="project" value="UniProtKB"/>
</dbReference>
<dbReference type="GO" id="GO:0000166">
    <property type="term" value="F:nucleotide binding"/>
    <property type="evidence" value="ECO:0007669"/>
    <property type="project" value="UniProtKB-KW"/>
</dbReference>
<dbReference type="GO" id="GO:0003697">
    <property type="term" value="F:single-stranded DNA binding"/>
    <property type="evidence" value="ECO:0000314"/>
    <property type="project" value="UniProtKB"/>
</dbReference>
<dbReference type="GO" id="GO:0003727">
    <property type="term" value="F:single-stranded RNA binding"/>
    <property type="evidence" value="ECO:0000314"/>
    <property type="project" value="UniProtKB"/>
</dbReference>
<dbReference type="GO" id="GO:0032197">
    <property type="term" value="P:retrotransposition"/>
    <property type="evidence" value="ECO:0000314"/>
    <property type="project" value="UniProtKB"/>
</dbReference>
<dbReference type="FunFam" id="1.20.5.390:FF:000005">
    <property type="entry name" value="LINE-1 retrotransposable element ORF1 protein"/>
    <property type="match status" value="1"/>
</dbReference>
<dbReference type="FunFam" id="3.30.250.20:FF:000005">
    <property type="entry name" value="LINE-1 retrotransposable element ORF1 protein"/>
    <property type="match status" value="1"/>
</dbReference>
<dbReference type="FunFam" id="3.30.70.1820:FF:000002">
    <property type="entry name" value="LINE-1 retrotransposable element ORF1 protein"/>
    <property type="match status" value="1"/>
</dbReference>
<dbReference type="Gene3D" id="3.30.250.20">
    <property type="entry name" value="L1 transposable element, C-terminal domain"/>
    <property type="match status" value="1"/>
</dbReference>
<dbReference type="Gene3D" id="3.30.70.1820">
    <property type="entry name" value="L1 transposable element, RRM domain"/>
    <property type="match status" value="1"/>
</dbReference>
<dbReference type="Gene3D" id="1.20.5.390">
    <property type="entry name" value="L1 transposable element, trimerization domain"/>
    <property type="match status" value="1"/>
</dbReference>
<dbReference type="InterPro" id="IPR042566">
    <property type="entry name" value="L1_C"/>
</dbReference>
<dbReference type="InterPro" id="IPR035300">
    <property type="entry name" value="L1_dsRBD"/>
</dbReference>
<dbReference type="InterPro" id="IPR043636">
    <property type="entry name" value="L1_RRM_dom"/>
</dbReference>
<dbReference type="InterPro" id="IPR035301">
    <property type="entry name" value="L1_trimer"/>
</dbReference>
<dbReference type="InterPro" id="IPR004244">
    <property type="entry name" value="Transposase_22"/>
</dbReference>
<dbReference type="PANTHER" id="PTHR11505">
    <property type="entry name" value="L1 TRANSPOSABLE ELEMENT-RELATED"/>
    <property type="match status" value="1"/>
</dbReference>
<dbReference type="Pfam" id="PF17490">
    <property type="entry name" value="Tnp_22_dsRBD"/>
    <property type="match status" value="1"/>
</dbReference>
<dbReference type="Pfam" id="PF17489">
    <property type="entry name" value="Tnp_22_trimer"/>
    <property type="match status" value="1"/>
</dbReference>
<dbReference type="Pfam" id="PF02994">
    <property type="entry name" value="Transposase_22"/>
    <property type="match status" value="1"/>
</dbReference>
<dbReference type="SUPFAM" id="SSF46966">
    <property type="entry name" value="Spectrin repeat"/>
    <property type="match status" value="1"/>
</dbReference>
<feature type="chain" id="PRO_0000425081" description="LINE-1 retrotransposable element ORF1 protein">
    <location>
        <begin position="1"/>
        <end position="338"/>
    </location>
</feature>
<feature type="region of interest" description="Disordered" evidence="2">
    <location>
        <begin position="1"/>
        <end position="40"/>
    </location>
</feature>
<feature type="region of interest" description="RNA recognition motif (RRM) domain">
    <location>
        <begin position="157"/>
        <end position="252"/>
    </location>
</feature>
<feature type="region of interest" description="C-terminal domain (CTD)">
    <location>
        <begin position="253"/>
        <end position="317"/>
    </location>
</feature>
<feature type="coiled-coil region" evidence="1">
    <location>
        <begin position="49"/>
        <end position="153"/>
    </location>
</feature>
<feature type="compositionally biased region" description="Polar residues" evidence="2">
    <location>
        <begin position="8"/>
        <end position="17"/>
    </location>
</feature>
<feature type="compositionally biased region" description="Polar residues" evidence="2">
    <location>
        <begin position="26"/>
        <end position="35"/>
    </location>
</feature>
<feature type="mutagenesis site" description="Small decrease in localization to stress granules; when associated with A-100 and A-114." evidence="5">
    <original>L</original>
    <variation>A</variation>
    <location>
        <position position="93"/>
    </location>
</feature>
<feature type="mutagenesis site" description="Small decrease in localization to stress granules; when associated with A-93 and A-114." evidence="5">
    <original>L</original>
    <variation>A</variation>
    <location>
        <position position="100"/>
    </location>
</feature>
<feature type="mutagenesis site" description="Small decrease in localization to stress granules; when associated with A-93 and A-100." evidence="5">
    <original>L</original>
    <variation>A</variation>
    <location>
        <position position="114"/>
    </location>
</feature>
<feature type="mutagenesis site" description="Loss of LINE-1 retrotransposition without affecting RNA-binding; when associated with A-123." evidence="7">
    <original>E</original>
    <variation>A</variation>
    <location>
        <position position="116"/>
    </location>
</feature>
<feature type="mutagenesis site" description="Loss of LINE-1 retrotransposition without affecting RNA-binding; when associated with A-116." evidence="7">
    <original>D</original>
    <variation>A</variation>
    <location>
        <position position="123"/>
    </location>
</feature>
<feature type="mutagenesis site" description="Loss of LINE-1 retrotransposition without affecting RNA-binding; when associated with I-135 and I-142." evidence="7">
    <original>G</original>
    <variation>I</variation>
    <location>
        <position position="132"/>
    </location>
</feature>
<feature type="mutagenesis site" description="Loss of LINE-1 retrotransposition with decreased RNA-binding; when associated with A-137, A-140 and S-141." evidence="7">
    <original>K</original>
    <variation>S</variation>
    <location>
        <position position="133"/>
    </location>
</feature>
<feature type="mutagenesis site" description="Loss of LINE-1 retrotransposition without effect on RNA-binding; when associated with I-132 and I-142." evidence="7">
    <original>R</original>
    <variation>I</variation>
    <location>
        <position position="135"/>
    </location>
</feature>
<feature type="mutagenesis site" description="Loss of LINE-1 retrotransposition with decreased RNA-binding; when associated with S-133, A-140 and S-141." evidence="7">
    <original>K</original>
    <variation>A</variation>
    <location>
        <position position="137"/>
    </location>
</feature>
<feature type="mutagenesis site" description="Loss of LINE-1 retrotransposition with decreased RNA-binding; when associated with S-133, A-137 and S-141." evidence="7">
    <original>K</original>
    <variation>A</variation>
    <location>
        <position position="140"/>
    </location>
</feature>
<feature type="mutagenesis site" description="Loss of LINE-1 retrotransposition with decreased RNA-binding; when associated with S-133, A-137 and A-140." evidence="7">
    <original>R</original>
    <variation>S</variation>
    <location>
        <position position="141"/>
    </location>
</feature>
<feature type="mutagenesis site" description="Loss of LINE-1 retrotransposition without effect on RNA-binding; when associated with I-132 and I-135." evidence="7">
    <original>N</original>
    <variation>I</variation>
    <location>
        <position position="142"/>
    </location>
</feature>
<feature type="mutagenesis site" description="No effect on subcellular localization; when associated with A-157." evidence="5">
    <original>R</original>
    <variation>A</variation>
    <location>
        <position position="155"/>
    </location>
</feature>
<feature type="mutagenesis site" description="No effect on subcellular localization; when associated with A-155. Complete loss of localization to stress granules, slightly increased localization to the nucleus; when associated with G-159." evidence="5">
    <original>N</original>
    <variation>A</variation>
    <location>
        <position position="157"/>
    </location>
</feature>
<feature type="mutagenesis site" description="Moderately alters RNA-binding activity." evidence="6">
    <original>R</original>
    <variation>A</variation>
    <location>
        <position position="159"/>
    </location>
</feature>
<feature type="mutagenesis site" description="Decreased localization to stress granules. Complete loss of localization to stress granules, slightly increased localization to the nucleus; when associated with A-157." evidence="5">
    <original>R</original>
    <variation>G</variation>
    <location>
        <position position="159"/>
    </location>
</feature>
<feature type="mutagenesis site" description="No effect on cytoplasmic localization, may increase nucleolar localization." evidence="5">
    <original>E</original>
    <variation>G</variation>
    <location>
        <position position="165"/>
    </location>
</feature>
<feature type="mutagenesis site" description="Loss of RNA-binding activity; when associated with A-210 and A-211." evidence="6 7">
    <original>R</original>
    <variation>A</variation>
    <location>
        <position position="206"/>
    </location>
</feature>
<feature type="mutagenesis site" description="Loss of RNA-binding activity; when associated with A-206 and A-211." evidence="6 7">
    <original>R</original>
    <variation>A</variation>
    <location>
        <position position="210"/>
    </location>
</feature>
<feature type="mutagenesis site" description="Loss of RNA-binding activity; when associated with A-206 and A-210." evidence="6 7">
    <original>R</original>
    <variation>A</variation>
    <location>
        <position position="211"/>
    </location>
</feature>
<feature type="mutagenesis site" description="Moderately alters RNA-binding activity." evidence="6 7">
    <original>I</original>
    <variation>Y</variation>
    <location>
        <position position="218"/>
    </location>
</feature>
<feature type="mutagenesis site" description="Loss of LINE-1 retrotransposition without affecting RNA-binding." evidence="6 7">
    <original>R</original>
    <variation>A</variation>
    <location>
        <position position="220"/>
    </location>
</feature>
<feature type="mutagenesis site" description="Loss of LINE-1 retrotransposition with decreased RNA-binding." evidence="6 7">
    <original>R</original>
    <variation>A</variation>
    <location>
        <position position="235"/>
    </location>
</feature>
<feature type="mutagenesis site" description="Small decrease in localization to stress granules." evidence="5">
    <original>RR</original>
    <variation>AA</variation>
    <location>
        <begin position="261"/>
        <end position="262"/>
    </location>
</feature>
<feature type="mutagenesis site" description="Loss of LINE-1 retrotransposition with decreased RNA-binding." evidence="6 7">
    <original>R</original>
    <variation>A</variation>
    <location>
        <position position="261"/>
    </location>
</feature>
<feature type="mutagenesis site" description="Loss of LINE-1 retrotransposition without affecting RNA-binding." evidence="6 7">
    <original>R</original>
    <variation>K</variation>
    <location>
        <position position="261"/>
    </location>
</feature>
<feature type="mutagenesis site" description="Loss of LINE-1 retrotransposition without affecting RNA-binding." evidence="7">
    <original>Y</original>
    <variation>A</variation>
    <location>
        <position position="282"/>
    </location>
</feature>
<feature type="sequence conflict" description="In Ref. 2; AAB59367." evidence="14" ref="2">
    <original>A</original>
    <variation>V</variation>
    <location>
        <position position="251"/>
    </location>
</feature>
<feature type="helix" evidence="18">
    <location>
        <begin position="53"/>
        <end position="90"/>
    </location>
</feature>
<feature type="helix" evidence="17">
    <location>
        <begin position="111"/>
        <end position="153"/>
    </location>
</feature>
<feature type="turn" evidence="17">
    <location>
        <begin position="154"/>
        <end position="156"/>
    </location>
</feature>
<feature type="strand" evidence="16">
    <location>
        <begin position="157"/>
        <end position="161"/>
    </location>
</feature>
<feature type="helix" evidence="16">
    <location>
        <begin position="171"/>
        <end position="185"/>
    </location>
</feature>
<feature type="helix" evidence="16">
    <location>
        <begin position="187"/>
        <end position="192"/>
    </location>
</feature>
<feature type="strand" evidence="16">
    <location>
        <begin position="197"/>
        <end position="206"/>
    </location>
</feature>
<feature type="strand" evidence="15">
    <location>
        <begin position="210"/>
        <end position="213"/>
    </location>
</feature>
<feature type="strand" evidence="16">
    <location>
        <begin position="216"/>
        <end position="222"/>
    </location>
</feature>
<feature type="helix" evidence="16">
    <location>
        <begin position="224"/>
        <end position="237"/>
    </location>
</feature>
<feature type="strand" evidence="16">
    <location>
        <begin position="240"/>
        <end position="242"/>
    </location>
</feature>
<feature type="strand" evidence="16">
    <location>
        <begin position="245"/>
        <end position="251"/>
    </location>
</feature>
<feature type="helix" evidence="17">
    <location>
        <begin position="255"/>
        <end position="263"/>
    </location>
</feature>
<feature type="helix" evidence="17">
    <location>
        <begin position="265"/>
        <end position="273"/>
    </location>
</feature>
<feature type="strand" evidence="17">
    <location>
        <begin position="279"/>
        <end position="281"/>
    </location>
</feature>
<feature type="turn" evidence="17">
    <location>
        <begin position="282"/>
        <end position="284"/>
    </location>
</feature>
<feature type="strand" evidence="17">
    <location>
        <begin position="285"/>
        <end position="299"/>
    </location>
</feature>
<feature type="helix" evidence="17">
    <location>
        <begin position="300"/>
        <end position="307"/>
    </location>
</feature>
<feature type="helix" evidence="17">
    <location>
        <begin position="311"/>
        <end position="317"/>
    </location>
</feature>
<feature type="turn" evidence="17">
    <location>
        <begin position="318"/>
        <end position="322"/>
    </location>
</feature>